<organism>
    <name type="scientific">Tolumonas auensis (strain DSM 9187 / NBRC 110442 / TA 4)</name>
    <dbReference type="NCBI Taxonomy" id="595494"/>
    <lineage>
        <taxon>Bacteria</taxon>
        <taxon>Pseudomonadati</taxon>
        <taxon>Pseudomonadota</taxon>
        <taxon>Gammaproteobacteria</taxon>
        <taxon>Aeromonadales</taxon>
        <taxon>Aeromonadaceae</taxon>
        <taxon>Tolumonas</taxon>
    </lineage>
</organism>
<evidence type="ECO:0000255" key="1">
    <source>
        <dbReference type="HAMAP-Rule" id="MF_00161"/>
    </source>
</evidence>
<dbReference type="EC" id="3.4.23.36" evidence="1"/>
<dbReference type="EMBL" id="CP001616">
    <property type="protein sequence ID" value="ACQ94542.1"/>
    <property type="molecule type" value="Genomic_DNA"/>
</dbReference>
<dbReference type="RefSeq" id="WP_015879991.1">
    <property type="nucleotide sequence ID" value="NC_012691.1"/>
</dbReference>
<dbReference type="SMR" id="C4LD11"/>
<dbReference type="STRING" id="595494.Tola_2953"/>
<dbReference type="MEROPS" id="A08.001"/>
<dbReference type="KEGG" id="tau:Tola_2953"/>
<dbReference type="eggNOG" id="COG0597">
    <property type="taxonomic scope" value="Bacteria"/>
</dbReference>
<dbReference type="HOGENOM" id="CLU_083252_4_1_6"/>
<dbReference type="OrthoDB" id="9810259at2"/>
<dbReference type="UniPathway" id="UPA00665"/>
<dbReference type="Proteomes" id="UP000009073">
    <property type="component" value="Chromosome"/>
</dbReference>
<dbReference type="GO" id="GO:0005886">
    <property type="term" value="C:plasma membrane"/>
    <property type="evidence" value="ECO:0007669"/>
    <property type="project" value="UniProtKB-SubCell"/>
</dbReference>
<dbReference type="GO" id="GO:0004190">
    <property type="term" value="F:aspartic-type endopeptidase activity"/>
    <property type="evidence" value="ECO:0007669"/>
    <property type="project" value="UniProtKB-UniRule"/>
</dbReference>
<dbReference type="GO" id="GO:0006508">
    <property type="term" value="P:proteolysis"/>
    <property type="evidence" value="ECO:0007669"/>
    <property type="project" value="UniProtKB-KW"/>
</dbReference>
<dbReference type="HAMAP" id="MF_00161">
    <property type="entry name" value="LspA"/>
    <property type="match status" value="1"/>
</dbReference>
<dbReference type="InterPro" id="IPR001872">
    <property type="entry name" value="Peptidase_A8"/>
</dbReference>
<dbReference type="NCBIfam" id="TIGR00077">
    <property type="entry name" value="lspA"/>
    <property type="match status" value="1"/>
</dbReference>
<dbReference type="PANTHER" id="PTHR33695">
    <property type="entry name" value="LIPOPROTEIN SIGNAL PEPTIDASE"/>
    <property type="match status" value="1"/>
</dbReference>
<dbReference type="PANTHER" id="PTHR33695:SF1">
    <property type="entry name" value="LIPOPROTEIN SIGNAL PEPTIDASE"/>
    <property type="match status" value="1"/>
</dbReference>
<dbReference type="Pfam" id="PF01252">
    <property type="entry name" value="Peptidase_A8"/>
    <property type="match status" value="1"/>
</dbReference>
<dbReference type="PRINTS" id="PR00781">
    <property type="entry name" value="LIPOSIGPTASE"/>
</dbReference>
<dbReference type="PROSITE" id="PS00855">
    <property type="entry name" value="SPASE_II"/>
    <property type="match status" value="1"/>
</dbReference>
<accession>C4LD11</accession>
<proteinExistence type="inferred from homology"/>
<protein>
    <recommendedName>
        <fullName evidence="1">Lipoprotein signal peptidase</fullName>
        <ecNumber evidence="1">3.4.23.36</ecNumber>
    </recommendedName>
    <alternativeName>
        <fullName evidence="1">Prolipoprotein signal peptidase</fullName>
    </alternativeName>
    <alternativeName>
        <fullName evidence="1">Signal peptidase II</fullName>
        <shortName evidence="1">SPase II</shortName>
    </alternativeName>
</protein>
<comment type="function">
    <text evidence="1">This protein specifically catalyzes the removal of signal peptides from prolipoproteins.</text>
</comment>
<comment type="catalytic activity">
    <reaction evidence="1">
        <text>Release of signal peptides from bacterial membrane prolipoproteins. Hydrolyzes -Xaa-Yaa-Zaa-|-(S,diacylglyceryl)Cys-, in which Xaa is hydrophobic (preferably Leu), and Yaa (Ala or Ser) and Zaa (Gly or Ala) have small, neutral side chains.</text>
        <dbReference type="EC" id="3.4.23.36"/>
    </reaction>
</comment>
<comment type="pathway">
    <text evidence="1">Protein modification; lipoprotein biosynthesis (signal peptide cleavage).</text>
</comment>
<comment type="subcellular location">
    <subcellularLocation>
        <location evidence="1">Cell inner membrane</location>
        <topology evidence="1">Multi-pass membrane protein</topology>
    </subcellularLocation>
</comment>
<comment type="similarity">
    <text evidence="1">Belongs to the peptidase A8 family.</text>
</comment>
<sequence length="164" mass="17850">MMSLLTGTGLRWMWLAVFAIVLDQAAKLAIMQHIPYGHGVVITPFFNLVHVYNTGAAFSFLADAEGWQRWLFSGLAIVISGVLAVAMAKAPAKCSLSNLAYSLVIGGAIGNLIDRVVYGHVVDFLDFHWQDLYHFAAFNVADMAISCGAVFIILDGFIKKPADK</sequence>
<reference key="1">
    <citation type="submission" date="2009-05" db="EMBL/GenBank/DDBJ databases">
        <title>Complete sequence of Tolumonas auensis DSM 9187.</title>
        <authorList>
            <consortium name="US DOE Joint Genome Institute"/>
            <person name="Lucas S."/>
            <person name="Copeland A."/>
            <person name="Lapidus A."/>
            <person name="Glavina del Rio T."/>
            <person name="Tice H."/>
            <person name="Bruce D."/>
            <person name="Goodwin L."/>
            <person name="Pitluck S."/>
            <person name="Chertkov O."/>
            <person name="Brettin T."/>
            <person name="Detter J.C."/>
            <person name="Han C."/>
            <person name="Larimer F."/>
            <person name="Land M."/>
            <person name="Hauser L."/>
            <person name="Kyrpides N."/>
            <person name="Mikhailova N."/>
            <person name="Spring S."/>
            <person name="Beller H."/>
        </authorList>
    </citation>
    <scope>NUCLEOTIDE SEQUENCE [LARGE SCALE GENOMIC DNA]</scope>
    <source>
        <strain>DSM 9187 / NBRC 110442 / TA 4</strain>
    </source>
</reference>
<keyword id="KW-0064">Aspartyl protease</keyword>
<keyword id="KW-0997">Cell inner membrane</keyword>
<keyword id="KW-1003">Cell membrane</keyword>
<keyword id="KW-0378">Hydrolase</keyword>
<keyword id="KW-0472">Membrane</keyword>
<keyword id="KW-0645">Protease</keyword>
<keyword id="KW-1185">Reference proteome</keyword>
<keyword id="KW-0812">Transmembrane</keyword>
<keyword id="KW-1133">Transmembrane helix</keyword>
<feature type="chain" id="PRO_1000203598" description="Lipoprotein signal peptidase">
    <location>
        <begin position="1"/>
        <end position="164"/>
    </location>
</feature>
<feature type="transmembrane region" description="Helical" evidence="1">
    <location>
        <begin position="2"/>
        <end position="22"/>
    </location>
</feature>
<feature type="transmembrane region" description="Helical" evidence="1">
    <location>
        <begin position="40"/>
        <end position="60"/>
    </location>
</feature>
<feature type="transmembrane region" description="Helical" evidence="1">
    <location>
        <begin position="70"/>
        <end position="90"/>
    </location>
</feature>
<feature type="transmembrane region" description="Helical" evidence="1">
    <location>
        <begin position="99"/>
        <end position="119"/>
    </location>
</feature>
<feature type="transmembrane region" description="Helical" evidence="1">
    <location>
        <begin position="138"/>
        <end position="158"/>
    </location>
</feature>
<feature type="active site" evidence="1">
    <location>
        <position position="123"/>
    </location>
</feature>
<feature type="active site" evidence="1">
    <location>
        <position position="142"/>
    </location>
</feature>
<name>LSPA_TOLAT</name>
<gene>
    <name evidence="1" type="primary">lspA</name>
    <name type="ordered locus">Tola_2953</name>
</gene>